<feature type="chain" id="PRO_0000258351" description="Phosphoribosylformylglycinamidine cyclo-ligase">
    <location>
        <begin position="1"/>
        <end position="356"/>
    </location>
</feature>
<protein>
    <recommendedName>
        <fullName evidence="1">Phosphoribosylformylglycinamidine cyclo-ligase</fullName>
        <ecNumber evidence="1">6.3.3.1</ecNumber>
    </recommendedName>
    <alternativeName>
        <fullName evidence="1">AIR synthase</fullName>
    </alternativeName>
    <alternativeName>
        <fullName evidence="1">AIRS</fullName>
    </alternativeName>
    <alternativeName>
        <fullName evidence="1">Phosphoribosyl-aminoimidazole synthetase</fullName>
    </alternativeName>
</protein>
<dbReference type="EC" id="6.3.3.1" evidence="1"/>
<dbReference type="EMBL" id="CR522870">
    <property type="protein sequence ID" value="CAG37263.1"/>
    <property type="molecule type" value="Genomic_DNA"/>
</dbReference>
<dbReference type="RefSeq" id="WP_011189775.1">
    <property type="nucleotide sequence ID" value="NC_006138.1"/>
</dbReference>
<dbReference type="SMR" id="Q6AK63"/>
<dbReference type="STRING" id="177439.DP2534"/>
<dbReference type="KEGG" id="dps:DP2534"/>
<dbReference type="eggNOG" id="COG0150">
    <property type="taxonomic scope" value="Bacteria"/>
</dbReference>
<dbReference type="HOGENOM" id="CLU_047116_0_0_7"/>
<dbReference type="OrthoDB" id="9777881at2"/>
<dbReference type="UniPathway" id="UPA00074">
    <property type="reaction ID" value="UER00129"/>
</dbReference>
<dbReference type="Proteomes" id="UP000000602">
    <property type="component" value="Chromosome"/>
</dbReference>
<dbReference type="GO" id="GO:0005829">
    <property type="term" value="C:cytosol"/>
    <property type="evidence" value="ECO:0007669"/>
    <property type="project" value="TreeGrafter"/>
</dbReference>
<dbReference type="GO" id="GO:0005524">
    <property type="term" value="F:ATP binding"/>
    <property type="evidence" value="ECO:0007669"/>
    <property type="project" value="UniProtKB-KW"/>
</dbReference>
<dbReference type="GO" id="GO:0004637">
    <property type="term" value="F:phosphoribosylamine-glycine ligase activity"/>
    <property type="evidence" value="ECO:0007669"/>
    <property type="project" value="TreeGrafter"/>
</dbReference>
<dbReference type="GO" id="GO:0004641">
    <property type="term" value="F:phosphoribosylformylglycinamidine cyclo-ligase activity"/>
    <property type="evidence" value="ECO:0007669"/>
    <property type="project" value="UniProtKB-UniRule"/>
</dbReference>
<dbReference type="GO" id="GO:0006189">
    <property type="term" value="P:'de novo' IMP biosynthetic process"/>
    <property type="evidence" value="ECO:0007669"/>
    <property type="project" value="UniProtKB-UniRule"/>
</dbReference>
<dbReference type="GO" id="GO:0046084">
    <property type="term" value="P:adenine biosynthetic process"/>
    <property type="evidence" value="ECO:0007669"/>
    <property type="project" value="TreeGrafter"/>
</dbReference>
<dbReference type="CDD" id="cd02196">
    <property type="entry name" value="PurM"/>
    <property type="match status" value="1"/>
</dbReference>
<dbReference type="FunFam" id="3.30.1330.10:FF:000001">
    <property type="entry name" value="Phosphoribosylformylglycinamidine cyclo-ligase"/>
    <property type="match status" value="1"/>
</dbReference>
<dbReference type="FunFam" id="3.90.650.10:FF:000001">
    <property type="entry name" value="Phosphoribosylformylglycinamidine cyclo-ligase"/>
    <property type="match status" value="1"/>
</dbReference>
<dbReference type="Gene3D" id="3.90.650.10">
    <property type="entry name" value="PurM-like C-terminal domain"/>
    <property type="match status" value="1"/>
</dbReference>
<dbReference type="Gene3D" id="3.30.1330.10">
    <property type="entry name" value="PurM-like, N-terminal domain"/>
    <property type="match status" value="1"/>
</dbReference>
<dbReference type="HAMAP" id="MF_00741">
    <property type="entry name" value="AIRS"/>
    <property type="match status" value="1"/>
</dbReference>
<dbReference type="InterPro" id="IPR010918">
    <property type="entry name" value="PurM-like_C_dom"/>
</dbReference>
<dbReference type="InterPro" id="IPR036676">
    <property type="entry name" value="PurM-like_C_sf"/>
</dbReference>
<dbReference type="InterPro" id="IPR016188">
    <property type="entry name" value="PurM-like_N"/>
</dbReference>
<dbReference type="InterPro" id="IPR036921">
    <property type="entry name" value="PurM-like_N_sf"/>
</dbReference>
<dbReference type="InterPro" id="IPR004733">
    <property type="entry name" value="PurM_cligase"/>
</dbReference>
<dbReference type="NCBIfam" id="TIGR00878">
    <property type="entry name" value="purM"/>
    <property type="match status" value="1"/>
</dbReference>
<dbReference type="PANTHER" id="PTHR10520:SF12">
    <property type="entry name" value="TRIFUNCTIONAL PURINE BIOSYNTHETIC PROTEIN ADENOSINE-3"/>
    <property type="match status" value="1"/>
</dbReference>
<dbReference type="PANTHER" id="PTHR10520">
    <property type="entry name" value="TRIFUNCTIONAL PURINE BIOSYNTHETIC PROTEIN ADENOSINE-3-RELATED"/>
    <property type="match status" value="1"/>
</dbReference>
<dbReference type="Pfam" id="PF00586">
    <property type="entry name" value="AIRS"/>
    <property type="match status" value="1"/>
</dbReference>
<dbReference type="Pfam" id="PF02769">
    <property type="entry name" value="AIRS_C"/>
    <property type="match status" value="1"/>
</dbReference>
<dbReference type="SUPFAM" id="SSF56042">
    <property type="entry name" value="PurM C-terminal domain-like"/>
    <property type="match status" value="1"/>
</dbReference>
<dbReference type="SUPFAM" id="SSF55326">
    <property type="entry name" value="PurM N-terminal domain-like"/>
    <property type="match status" value="1"/>
</dbReference>
<reference key="1">
    <citation type="journal article" date="2004" name="Environ. Microbiol.">
        <title>The genome of Desulfotalea psychrophila, a sulfate-reducing bacterium from permanently cold Arctic sediments.</title>
        <authorList>
            <person name="Rabus R."/>
            <person name="Ruepp A."/>
            <person name="Frickey T."/>
            <person name="Rattei T."/>
            <person name="Fartmann B."/>
            <person name="Stark M."/>
            <person name="Bauer M."/>
            <person name="Zibat A."/>
            <person name="Lombardot T."/>
            <person name="Becker I."/>
            <person name="Amann J."/>
            <person name="Gellner K."/>
            <person name="Teeling H."/>
            <person name="Leuschner W.D."/>
            <person name="Gloeckner F.-O."/>
            <person name="Lupas A.N."/>
            <person name="Amann R."/>
            <person name="Klenk H.-P."/>
        </authorList>
    </citation>
    <scope>NUCLEOTIDE SEQUENCE [LARGE SCALE GENOMIC DNA]</scope>
    <source>
        <strain>DSM 12343 / LSv54</strain>
    </source>
</reference>
<sequence>MSTTSEAVQSKYSEAGVDIDKGNAFVEGIKDIVASTHKNGVIDNIGGFSAHIAIDVTKYPKPVIVNSTDGVGTKLAIAHMCNKHDTIGIDLVAMCVNDLIVGGATPLSFLDYFAVGKLDIEVATEVVKGIAEGCKQAGCSLVGGETAEMPGLYQGSDYDLAGFVTGIVDRDSIIDGSDVRSGNKIIGLASSGVHSNGYSLVRKICFDDNDYSVEDHIEELGSTLGEELLKPTRIYVQQVLNVIKNYPIHGMVHNTGGGFIDNIPRILPKGYKATLQAGSWDVPAIFTFLEEKGKVPREEMYRTFNMGVGLLVIVAEDKAEDILHHFEALGEKASIIGEIQKQTDENDERVTILPEG</sequence>
<keyword id="KW-0067">ATP-binding</keyword>
<keyword id="KW-0963">Cytoplasm</keyword>
<keyword id="KW-0436">Ligase</keyword>
<keyword id="KW-0547">Nucleotide-binding</keyword>
<keyword id="KW-0658">Purine biosynthesis</keyword>
<keyword id="KW-1185">Reference proteome</keyword>
<accession>Q6AK63</accession>
<comment type="catalytic activity">
    <reaction evidence="1">
        <text>2-formamido-N(1)-(5-O-phospho-beta-D-ribosyl)acetamidine + ATP = 5-amino-1-(5-phospho-beta-D-ribosyl)imidazole + ADP + phosphate + H(+)</text>
        <dbReference type="Rhea" id="RHEA:23032"/>
        <dbReference type="ChEBI" id="CHEBI:15378"/>
        <dbReference type="ChEBI" id="CHEBI:30616"/>
        <dbReference type="ChEBI" id="CHEBI:43474"/>
        <dbReference type="ChEBI" id="CHEBI:137981"/>
        <dbReference type="ChEBI" id="CHEBI:147287"/>
        <dbReference type="ChEBI" id="CHEBI:456216"/>
        <dbReference type="EC" id="6.3.3.1"/>
    </reaction>
</comment>
<comment type="pathway">
    <text evidence="1">Purine metabolism; IMP biosynthesis via de novo pathway; 5-amino-1-(5-phospho-D-ribosyl)imidazole from N(2)-formyl-N(1)-(5-phospho-D-ribosyl)glycinamide: step 2/2.</text>
</comment>
<comment type="subcellular location">
    <subcellularLocation>
        <location evidence="1">Cytoplasm</location>
    </subcellularLocation>
</comment>
<comment type="similarity">
    <text evidence="1">Belongs to the AIR synthase family.</text>
</comment>
<organism>
    <name type="scientific">Desulfotalea psychrophila (strain LSv54 / DSM 12343)</name>
    <dbReference type="NCBI Taxonomy" id="177439"/>
    <lineage>
        <taxon>Bacteria</taxon>
        <taxon>Pseudomonadati</taxon>
        <taxon>Thermodesulfobacteriota</taxon>
        <taxon>Desulfobulbia</taxon>
        <taxon>Desulfobulbales</taxon>
        <taxon>Desulfocapsaceae</taxon>
        <taxon>Desulfotalea</taxon>
    </lineage>
</organism>
<name>PUR5_DESPS</name>
<gene>
    <name evidence="1" type="primary">purM</name>
    <name type="ordered locus">DP2534</name>
</gene>
<proteinExistence type="inferred from homology"/>
<evidence type="ECO:0000255" key="1">
    <source>
        <dbReference type="HAMAP-Rule" id="MF_00741"/>
    </source>
</evidence>